<dbReference type="EC" id="2.-.-.-"/>
<dbReference type="EMBL" id="AL009126">
    <property type="protein sequence ID" value="CAB15257.1"/>
    <property type="molecule type" value="Genomic_DNA"/>
</dbReference>
<dbReference type="PIR" id="E70019">
    <property type="entry name" value="E70019"/>
</dbReference>
<dbReference type="RefSeq" id="NP_391147.1">
    <property type="nucleotide sequence ID" value="NC_000964.3"/>
</dbReference>
<dbReference type="RefSeq" id="WP_003222809.1">
    <property type="nucleotide sequence ID" value="NZ_OZ025638.1"/>
</dbReference>
<dbReference type="PDB" id="1XJS">
    <property type="method" value="NMR"/>
    <property type="chains" value="A=1-147"/>
</dbReference>
<dbReference type="PDB" id="2AZH">
    <property type="method" value="NMR"/>
    <property type="chains" value="A=1-147"/>
</dbReference>
<dbReference type="PDB" id="5XT5">
    <property type="method" value="X-ray"/>
    <property type="resolution" value="2.34 A"/>
    <property type="chains" value="C/D=1-147"/>
</dbReference>
<dbReference type="PDB" id="5XT6">
    <property type="method" value="X-ray"/>
    <property type="resolution" value="3.50 A"/>
    <property type="chains" value="C/D=1-147"/>
</dbReference>
<dbReference type="PDB" id="6JZV">
    <property type="method" value="X-ray"/>
    <property type="resolution" value="2.00 A"/>
    <property type="chains" value="A/B/C/D=1-147"/>
</dbReference>
<dbReference type="PDB" id="6JZW">
    <property type="method" value="X-ray"/>
    <property type="resolution" value="2.64 A"/>
    <property type="chains" value="A/B/C/D=1-147"/>
</dbReference>
<dbReference type="PDBsum" id="1XJS"/>
<dbReference type="PDBsum" id="2AZH"/>
<dbReference type="PDBsum" id="5XT5"/>
<dbReference type="PDBsum" id="5XT6"/>
<dbReference type="PDBsum" id="6JZV"/>
<dbReference type="PDBsum" id="6JZW"/>
<dbReference type="BMRB" id="O32163"/>
<dbReference type="SMR" id="O32163"/>
<dbReference type="FunCoup" id="O32163">
    <property type="interactions" value="456"/>
</dbReference>
<dbReference type="IntAct" id="O32163">
    <property type="interactions" value="1"/>
</dbReference>
<dbReference type="MINT" id="O32163"/>
<dbReference type="STRING" id="224308.BSU32680"/>
<dbReference type="jPOST" id="O32163"/>
<dbReference type="PaxDb" id="224308-BSU32680"/>
<dbReference type="EnsemblBacteria" id="CAB15257">
    <property type="protein sequence ID" value="CAB15257"/>
    <property type="gene ID" value="BSU_32680"/>
</dbReference>
<dbReference type="GeneID" id="86872193"/>
<dbReference type="GeneID" id="936702"/>
<dbReference type="KEGG" id="bsu:BSU32680"/>
<dbReference type="PATRIC" id="fig|224308.179.peg.3539"/>
<dbReference type="eggNOG" id="COG0822">
    <property type="taxonomic scope" value="Bacteria"/>
</dbReference>
<dbReference type="InParanoid" id="O32163"/>
<dbReference type="OrthoDB" id="9804157at2"/>
<dbReference type="PhylomeDB" id="O32163"/>
<dbReference type="BioCyc" id="BSUB:BSU32680-MONOMER"/>
<dbReference type="EvolutionaryTrace" id="O32163"/>
<dbReference type="PRO" id="PR:O32163"/>
<dbReference type="Proteomes" id="UP000001570">
    <property type="component" value="Chromosome"/>
</dbReference>
<dbReference type="GO" id="GO:0005737">
    <property type="term" value="C:cytoplasm"/>
    <property type="evidence" value="ECO:0000318"/>
    <property type="project" value="GO_Central"/>
</dbReference>
<dbReference type="GO" id="GO:0051537">
    <property type="term" value="F:2 iron, 2 sulfur cluster binding"/>
    <property type="evidence" value="ECO:0000318"/>
    <property type="project" value="GO_Central"/>
</dbReference>
<dbReference type="GO" id="GO:0008198">
    <property type="term" value="F:ferrous iron binding"/>
    <property type="evidence" value="ECO:0000318"/>
    <property type="project" value="GO_Central"/>
</dbReference>
<dbReference type="GO" id="GO:0016740">
    <property type="term" value="F:transferase activity"/>
    <property type="evidence" value="ECO:0007669"/>
    <property type="project" value="UniProtKB-KW"/>
</dbReference>
<dbReference type="GO" id="GO:0006879">
    <property type="term" value="P:intracellular iron ion homeostasis"/>
    <property type="evidence" value="ECO:0000318"/>
    <property type="project" value="GO_Central"/>
</dbReference>
<dbReference type="GO" id="GO:0016226">
    <property type="term" value="P:iron-sulfur cluster assembly"/>
    <property type="evidence" value="ECO:0007669"/>
    <property type="project" value="InterPro"/>
</dbReference>
<dbReference type="CDD" id="cd06664">
    <property type="entry name" value="IscU_like"/>
    <property type="match status" value="1"/>
</dbReference>
<dbReference type="FunFam" id="3.90.1010.10:FF:000002">
    <property type="entry name" value="Iron-sulfur cluster assembly scaffold protein NifU"/>
    <property type="match status" value="1"/>
</dbReference>
<dbReference type="Gene3D" id="3.90.1010.10">
    <property type="match status" value="1"/>
</dbReference>
<dbReference type="InterPro" id="IPR002871">
    <property type="entry name" value="NIF_FeS_clus_asmbl_NifU_N"/>
</dbReference>
<dbReference type="NCBIfam" id="TIGR01994">
    <property type="entry name" value="SUF_scaf_2"/>
    <property type="match status" value="1"/>
</dbReference>
<dbReference type="PANTHER" id="PTHR10093">
    <property type="entry name" value="IRON-SULFUR CLUSTER ASSEMBLY ENZYME NIFU HOMOLOG"/>
    <property type="match status" value="1"/>
</dbReference>
<dbReference type="Pfam" id="PF01592">
    <property type="entry name" value="NifU_N"/>
    <property type="match status" value="1"/>
</dbReference>
<dbReference type="SUPFAM" id="SSF82649">
    <property type="entry name" value="SufE/NifU"/>
    <property type="match status" value="1"/>
</dbReference>
<feature type="chain" id="PRO_0000166180" description="Zinc-dependent sulfurtransferase SufU">
    <location>
        <begin position="1"/>
        <end position="147"/>
    </location>
</feature>
<feature type="binding site" evidence="7 9 10">
    <location>
        <position position="41"/>
    </location>
    <ligand>
        <name>Zn(2+)</name>
        <dbReference type="ChEBI" id="CHEBI:29105"/>
    </ligand>
</feature>
<feature type="binding site" evidence="7 9 10">
    <location>
        <position position="43"/>
    </location>
    <ligand>
        <name>Zn(2+)</name>
        <dbReference type="ChEBI" id="CHEBI:29105"/>
    </ligand>
</feature>
<feature type="binding site" evidence="7 9 10">
    <location>
        <position position="66"/>
    </location>
    <ligand>
        <name>Zn(2+)</name>
        <dbReference type="ChEBI" id="CHEBI:29105"/>
    </ligand>
</feature>
<feature type="binding site" evidence="7 9 10">
    <location>
        <position position="128"/>
    </location>
    <ligand>
        <name>Zn(2+)</name>
        <dbReference type="ChEBI" id="CHEBI:29105"/>
    </ligand>
</feature>
<feature type="mutagenesis site" description="Does not activate SufS; dominant negative to wild-type protein, interacts with SufS. Binds about 40% Zn(2+)." evidence="3 5">
    <original>C</original>
    <variation>A</variation>
    <location>
        <position position="41"/>
    </location>
</feature>
<feature type="mutagenesis site" description="Complete loss of growth without mevalonate." evidence="8">
    <original>C</original>
    <variation>D</variation>
    <location>
        <position position="41"/>
    </location>
</feature>
<feature type="mutagenesis site" description="Increases stability of the bound Fe-S cluster. Binds SufS, binds about 35% Zn(2+)." evidence="1 5">
    <original>D</original>
    <variation>A</variation>
    <location>
        <position position="43"/>
    </location>
</feature>
<feature type="mutagenesis site" description="Does not interact with SufS, does not activate SufS; no effect in presence of wild-type protein. Binds about 15% Zn(2+)." evidence="3 5">
    <original>C</original>
    <variation>A</variation>
    <location>
        <position position="66"/>
    </location>
</feature>
<feature type="mutagenesis site" description="Complete loss of growth without mevalonate." evidence="8">
    <original>C</original>
    <variation>D</variation>
    <location>
        <position position="66"/>
    </location>
</feature>
<feature type="mutagenesis site" description="Does not interact with SufS, does not activate SufS; no effect in presence of wild-type protein. Binds about 45% Zn(2+)." evidence="2 3 5">
    <original>C</original>
    <variation>A</variation>
    <location>
        <position position="128"/>
    </location>
</feature>
<feature type="mutagenesis site" description="Delayed growth without mevalonate." evidence="8">
    <original>C</original>
    <variation>D</variation>
    <location>
        <position position="128"/>
    </location>
</feature>
<feature type="helix" evidence="18">
    <location>
        <begin position="5"/>
        <end position="20"/>
    </location>
</feature>
<feature type="strand" evidence="18">
    <location>
        <begin position="23"/>
        <end position="26"/>
    </location>
</feature>
<feature type="strand" evidence="18">
    <location>
        <begin position="32"/>
        <end position="38"/>
    </location>
</feature>
<feature type="turn" evidence="18">
    <location>
        <begin position="39"/>
        <end position="42"/>
    </location>
</feature>
<feature type="strand" evidence="18">
    <location>
        <begin position="43"/>
        <end position="52"/>
    </location>
</feature>
<feature type="strand" evidence="18">
    <location>
        <begin position="55"/>
        <end position="64"/>
    </location>
</feature>
<feature type="helix" evidence="18">
    <location>
        <begin position="67"/>
        <end position="80"/>
    </location>
</feature>
<feature type="helix" evidence="18">
    <location>
        <begin position="85"/>
        <end position="100"/>
    </location>
</feature>
<feature type="helix" evidence="18">
    <location>
        <begin position="111"/>
        <end position="121"/>
    </location>
</feature>
<feature type="helix" evidence="18">
    <location>
        <begin position="123"/>
        <end position="125"/>
    </location>
</feature>
<feature type="helix" evidence="18">
    <location>
        <begin position="126"/>
        <end position="140"/>
    </location>
</feature>
<feature type="strand" evidence="17">
    <location>
        <begin position="143"/>
        <end position="145"/>
    </location>
</feature>
<organism>
    <name type="scientific">Bacillus subtilis (strain 168)</name>
    <dbReference type="NCBI Taxonomy" id="224308"/>
    <lineage>
        <taxon>Bacteria</taxon>
        <taxon>Bacillati</taxon>
        <taxon>Bacillota</taxon>
        <taxon>Bacilli</taxon>
        <taxon>Bacillales</taxon>
        <taxon>Bacillaceae</taxon>
        <taxon>Bacillus</taxon>
    </lineage>
</organism>
<comment type="function">
    <text evidence="1 2 3 4 5 6 7 8">Part of the SUF-like system that mediates the biosynthesis of iron-sulfur (Fe-S) clusters. Acts as a sulfurtransferase and thus transfers sulfur from SufS to SufB (PubMed:29292548). Mechanistically, the transfer from SufS to SufU is triggered by zinc-ligand swapping that provides a free thiol from SufU to accept sulfur from SufS (PubMed:29235855).</text>
</comment>
<comment type="cofactor">
    <cofactor evidence="5">
        <name>Zn(2+)</name>
        <dbReference type="ChEBI" id="CHEBI:29105"/>
    </cofactor>
    <text evidence="5">Bind 1 Zn(2+) per monomer.</text>
</comment>
<comment type="subunit">
    <text evidence="2 3 6">Interacts with SufS; this interaction enhances SufS cysteine desulfurase activity. Interacts with frataxin/Fra (PubMed:27382962).</text>
</comment>
<comment type="interaction">
    <interactant intactId="EBI-8561343">
        <id>O32163</id>
    </interactant>
    <interactant intactId="EBI-7826704">
        <id>O32164</id>
        <label>sufS</label>
    </interactant>
    <organismsDiffer>false</organismsDiffer>
    <experiments>8</experiments>
</comment>
<comment type="disruption phenotype">
    <text evidence="1 4 8">Essential, it cannot be deleted. Upon depletion cells grow very slowly while aconitase and succinate dehydrogenase, both of which contain Fe-S clusters, have decreased activity. Upon depletion no change in reactive oxygen species is observed, while a modified bacillibactin (BB), an endogenous siderophore, is produced.</text>
</comment>
<comment type="similarity">
    <text evidence="11">Belongs to the NifU family.</text>
</comment>
<comment type="caution">
    <text evidence="12 13 14">Was originally thought to be an iron-sulfur cluster assembly scaffold protein (PubMed:20097860, PubMed:21236255). It is now thought to be a zinc-dependent sulfur transfer protein (PubMed:24321018).</text>
</comment>
<comment type="caution">
    <text evidence="13 14">The inhibition of SufS activity by the Cys-41 mutation in this protein has been described as competitive and non-competitive inhibition (PubMed:21236255, PubMed:24321018).</text>
</comment>
<protein>
    <recommendedName>
        <fullName>Zinc-dependent sulfurtransferase SufU</fullName>
        <ecNumber>2.-.-.-</ecNumber>
    </recommendedName>
    <alternativeName>
        <fullName>Putative iron-sulfur cluster assembly scaffold protein SufU</fullName>
    </alternativeName>
    <alternativeName>
        <fullName>Sulfur acceptor protein SufU</fullName>
    </alternativeName>
</protein>
<proteinExistence type="evidence at protein level"/>
<reference key="1">
    <citation type="journal article" date="1997" name="Nature">
        <title>The complete genome sequence of the Gram-positive bacterium Bacillus subtilis.</title>
        <authorList>
            <person name="Kunst F."/>
            <person name="Ogasawara N."/>
            <person name="Moszer I."/>
            <person name="Albertini A.M."/>
            <person name="Alloni G."/>
            <person name="Azevedo V."/>
            <person name="Bertero M.G."/>
            <person name="Bessieres P."/>
            <person name="Bolotin A."/>
            <person name="Borchert S."/>
            <person name="Borriss R."/>
            <person name="Boursier L."/>
            <person name="Brans A."/>
            <person name="Braun M."/>
            <person name="Brignell S.C."/>
            <person name="Bron S."/>
            <person name="Brouillet S."/>
            <person name="Bruschi C.V."/>
            <person name="Caldwell B."/>
            <person name="Capuano V."/>
            <person name="Carter N.M."/>
            <person name="Choi S.-K."/>
            <person name="Codani J.-J."/>
            <person name="Connerton I.F."/>
            <person name="Cummings N.J."/>
            <person name="Daniel R.A."/>
            <person name="Denizot F."/>
            <person name="Devine K.M."/>
            <person name="Duesterhoeft A."/>
            <person name="Ehrlich S.D."/>
            <person name="Emmerson P.T."/>
            <person name="Entian K.-D."/>
            <person name="Errington J."/>
            <person name="Fabret C."/>
            <person name="Ferrari E."/>
            <person name="Foulger D."/>
            <person name="Fritz C."/>
            <person name="Fujita M."/>
            <person name="Fujita Y."/>
            <person name="Fuma S."/>
            <person name="Galizzi A."/>
            <person name="Galleron N."/>
            <person name="Ghim S.-Y."/>
            <person name="Glaser P."/>
            <person name="Goffeau A."/>
            <person name="Golightly E.J."/>
            <person name="Grandi G."/>
            <person name="Guiseppi G."/>
            <person name="Guy B.J."/>
            <person name="Haga K."/>
            <person name="Haiech J."/>
            <person name="Harwood C.R."/>
            <person name="Henaut A."/>
            <person name="Hilbert H."/>
            <person name="Holsappel S."/>
            <person name="Hosono S."/>
            <person name="Hullo M.-F."/>
            <person name="Itaya M."/>
            <person name="Jones L.-M."/>
            <person name="Joris B."/>
            <person name="Karamata D."/>
            <person name="Kasahara Y."/>
            <person name="Klaerr-Blanchard M."/>
            <person name="Klein C."/>
            <person name="Kobayashi Y."/>
            <person name="Koetter P."/>
            <person name="Koningstein G."/>
            <person name="Krogh S."/>
            <person name="Kumano M."/>
            <person name="Kurita K."/>
            <person name="Lapidus A."/>
            <person name="Lardinois S."/>
            <person name="Lauber J."/>
            <person name="Lazarevic V."/>
            <person name="Lee S.-M."/>
            <person name="Levine A."/>
            <person name="Liu H."/>
            <person name="Masuda S."/>
            <person name="Mauel C."/>
            <person name="Medigue C."/>
            <person name="Medina N."/>
            <person name="Mellado R.P."/>
            <person name="Mizuno M."/>
            <person name="Moestl D."/>
            <person name="Nakai S."/>
            <person name="Noback M."/>
            <person name="Noone D."/>
            <person name="O'Reilly M."/>
            <person name="Ogawa K."/>
            <person name="Ogiwara A."/>
            <person name="Oudega B."/>
            <person name="Park S.-H."/>
            <person name="Parro V."/>
            <person name="Pohl T.M."/>
            <person name="Portetelle D."/>
            <person name="Porwollik S."/>
            <person name="Prescott A.M."/>
            <person name="Presecan E."/>
            <person name="Pujic P."/>
            <person name="Purnelle B."/>
            <person name="Rapoport G."/>
            <person name="Rey M."/>
            <person name="Reynolds S."/>
            <person name="Rieger M."/>
            <person name="Rivolta C."/>
            <person name="Rocha E."/>
            <person name="Roche B."/>
            <person name="Rose M."/>
            <person name="Sadaie Y."/>
            <person name="Sato T."/>
            <person name="Scanlan E."/>
            <person name="Schleich S."/>
            <person name="Schroeter R."/>
            <person name="Scoffone F."/>
            <person name="Sekiguchi J."/>
            <person name="Sekowska A."/>
            <person name="Seror S.J."/>
            <person name="Serror P."/>
            <person name="Shin B.-S."/>
            <person name="Soldo B."/>
            <person name="Sorokin A."/>
            <person name="Tacconi E."/>
            <person name="Takagi T."/>
            <person name="Takahashi H."/>
            <person name="Takemaru K."/>
            <person name="Takeuchi M."/>
            <person name="Tamakoshi A."/>
            <person name="Tanaka T."/>
            <person name="Terpstra P."/>
            <person name="Tognoni A."/>
            <person name="Tosato V."/>
            <person name="Uchiyama S."/>
            <person name="Vandenbol M."/>
            <person name="Vannier F."/>
            <person name="Vassarotti A."/>
            <person name="Viari A."/>
            <person name="Wambutt R."/>
            <person name="Wedler E."/>
            <person name="Wedler H."/>
            <person name="Weitzenegger T."/>
            <person name="Winters P."/>
            <person name="Wipat A."/>
            <person name="Yamamoto H."/>
            <person name="Yamane K."/>
            <person name="Yasumoto K."/>
            <person name="Yata K."/>
            <person name="Yoshida K."/>
            <person name="Yoshikawa H.-F."/>
            <person name="Zumstein E."/>
            <person name="Yoshikawa H."/>
            <person name="Danchin A."/>
        </authorList>
    </citation>
    <scope>NUCLEOTIDE SEQUENCE [LARGE SCALE GENOMIC DNA]</scope>
    <source>
        <strain>168</strain>
    </source>
</reference>
<reference key="2">
    <citation type="journal article" date="2010" name="Biochemistry">
        <title>Kinetic analysis of the bisubstrate cysteine desulfurase SufS from Bacillus subtilis.</title>
        <authorList>
            <person name="Selbach B."/>
            <person name="Earles E."/>
            <person name="Dos Santos P.C."/>
        </authorList>
    </citation>
    <scope>FUNCTION</scope>
    <scope>SUBUNIT</scope>
    <scope>MUTAGENESIS OF CYS-128</scope>
    <source>
        <strain>168 / PS832</strain>
    </source>
</reference>
<reference key="3">
    <citation type="journal article" date="2010" name="J. Bacteriol.">
        <title>SufU is an essential iron-sulfur cluster scaffold protein in Bacillus subtilis.</title>
        <authorList>
            <person name="Albrecht A.G."/>
            <person name="Netz D.J."/>
            <person name="Miethke M."/>
            <person name="Pierik A.J."/>
            <person name="Burghaus O."/>
            <person name="Peuckert F."/>
            <person name="Lill R."/>
            <person name="Marahiel M.A."/>
        </authorList>
    </citation>
    <scope>FUNCTION</scope>
    <scope>BINDS AN FE-S CLUSTER</scope>
    <scope>DISRUPTION PHENOTYPE</scope>
    <scope>MUTAGENESIS OF ASP-43</scope>
    <source>
        <strain>168</strain>
    </source>
</reference>
<reference key="4">
    <citation type="journal article" date="2011" name="ChemBioChem">
        <title>The frataxin homologue Fra plays a key role in intracellular iron channeling in Bacillus subtilis.</title>
        <authorList>
            <person name="Albrecht A.G."/>
            <person name="Landmann H."/>
            <person name="Nette D."/>
            <person name="Burghaus O."/>
            <person name="Peuckert F."/>
            <person name="Seubert A."/>
            <person name="Miethke M."/>
            <person name="Marahiel M.A."/>
        </authorList>
    </citation>
    <scope>FUNCTION</scope>
    <scope>DISRUPTION PHENOTYPE</scope>
    <source>
        <strain>ATCC 21332 / IAM 1213</strain>
    </source>
</reference>
<reference key="5">
    <citation type="journal article" date="2011" name="FEBS Lett.">
        <title>Mechanistic characterization of sulfur transfer from cysteine desulfurase SufS to the iron-sulfur scaffold SufU in Bacillus subtilis.</title>
        <authorList>
            <person name="Albrecht A.G."/>
            <person name="Peuckert F."/>
            <person name="Landmann H."/>
            <person name="Miethke M."/>
            <person name="Seubert A."/>
            <person name="Marahiel M.A."/>
        </authorList>
    </citation>
    <scope>BINDS AN FE-S CLUSTER</scope>
    <scope>INTERACTION WITH SUFS</scope>
    <scope>SUBUNIT</scope>
    <scope>MUTAGENESIS OF CYS-41; CYS-66 AND CYS-128</scope>
    <source>
        <strain>168</strain>
    </source>
</reference>
<reference key="6">
    <citation type="journal article" date="2014" name="Biochemistry">
        <title>Fe-S cluster biogenesis in Gram-positive bacteria: SufU is a zinc-dependent sulfur transfer protein.</title>
        <authorList>
            <person name="Selbach B.P."/>
            <person name="Chung A.H."/>
            <person name="Scott A.D."/>
            <person name="George S.J."/>
            <person name="Cramer S.P."/>
            <person name="Dos Santos P.C."/>
        </authorList>
    </citation>
    <scope>FUNCTION AS A SULFURTRANSFERASE</scope>
    <scope>ZINC-BINDING</scope>
    <scope>COFACTOR</scope>
    <scope>MUTAGENESIS OF CYS-41; ASP-43; CYS-66 AND CYS-128</scope>
    <source>
        <strain>168 / PS832</strain>
    </source>
</reference>
<reference key="7">
    <citation type="journal article" date="2016" name="PLoS ONE">
        <title>Crystal Structure of Bacillus subtilis Cysteine Desulfurase SufS and Its Dynamic Interaction with Frataxin and Scaffold Protein SufU.</title>
        <authorList>
            <person name="Blauenburg B."/>
            <person name="Mielcarek A."/>
            <person name="Altegoer F."/>
            <person name="Fage C.D."/>
            <person name="Linne U."/>
            <person name="Bange G."/>
            <person name="Marahiel M.A."/>
        </authorList>
    </citation>
    <scope>FUNCTION</scope>
    <scope>INTERACTION WITH FRA AND SUFS</scope>
</reference>
<reference key="8">
    <citation type="journal article" date="2018" name="Mol. Microbiol.">
        <title>Distinct roles for U-type proteins in iron-sulfur cluster biosynthesis revealed by genetic analysis of the Bacillus subtilis sufCDSUB operon.</title>
        <authorList>
            <person name="Yokoyama N."/>
            <person name="Nonaka C."/>
            <person name="Ohashi Y."/>
            <person name="Shioda M."/>
            <person name="Terahata T."/>
            <person name="Chen W."/>
            <person name="Sakamoto K."/>
            <person name="Maruyama C."/>
            <person name="Saito T."/>
            <person name="Yuda E."/>
            <person name="Tanaka N."/>
            <person name="Fujishiro T."/>
            <person name="Kuzuyama T."/>
            <person name="Asai K."/>
            <person name="Takahashi Y."/>
        </authorList>
    </citation>
    <scope>FUNCTION</scope>
    <scope>DISRUPTION PHENOTYPE</scope>
    <scope>MUTAGENESIS OF CYS-41; CYS-66 AND CYS-128</scope>
    <source>
        <strain>168</strain>
    </source>
</reference>
<reference key="9">
    <citation type="submission" date="2004-09" db="PDB data bank">
        <title>Solution structure of iron-sulfur cluster assembly protein IscU from Bacillus subtilis, with zinc bound at the active site. Northeast Structural Genomics Consortium Target SR17.</title>
        <authorList>
            <person name="Kornhaber G.J."/>
            <person name="Swapna G.V.T."/>
            <person name="Ramelot T.A."/>
            <person name="Cort J.R."/>
            <person name="Kennedy M.A."/>
            <person name="Montelione G.T."/>
        </authorList>
    </citation>
    <scope>STRUCTURE BY NMR IN COMPLEX WITH ZINC</scope>
</reference>
<reference key="10">
    <citation type="submission" date="2005-09" db="PDB data bank">
        <title>Solution NMR structure of Zn-ligated Fe-S cluster assembly scaffold protein SufU From Bacillus subtilis.</title>
        <authorList>
            <person name="Kornhaber G.J."/>
            <person name="Swapna G.V.T."/>
            <person name="Ramelot T.A."/>
            <person name="Cort J.R."/>
            <person name="Aramini J.M."/>
            <person name="Kennedy M.A."/>
            <person name="Montelione G.T."/>
        </authorList>
    </citation>
    <scope>STRUCTURE BY NMR IN COMPLEX WITH ZINC</scope>
</reference>
<reference evidence="15 16" key="11">
    <citation type="journal article" date="2017" name="J. Am. Chem. Soc.">
        <title>Zinc-Ligand Swapping Mediated Complex Formation and Sulfur Transfer between SufS and SufU for Iron-Sulfur Cluster Biogenesis in Bacillus subtilis.</title>
        <authorList>
            <person name="Fujishiro T."/>
            <person name="Terahata T."/>
            <person name="Kunichika K."/>
            <person name="Yokoyama N."/>
            <person name="Maruyama C."/>
            <person name="Asai K."/>
            <person name="Takahashi Y."/>
        </authorList>
    </citation>
    <scope>X-RAY CRYSTALLOGRAPHY (2.34 ANGSTROMS) IN COMPLEX WITH ZINC</scope>
    <scope>FUNCTION</scope>
    <scope>INTERACTION WITH SUFS</scope>
    <scope>ACTIVITY REGULATION</scope>
    <source>
        <strain>168</strain>
    </source>
</reference>
<gene>
    <name type="primary">sufU</name>
    <name type="synonym">iscU</name>
    <name type="synonym">nifU</name>
    <name type="synonym">yurV</name>
    <name type="ordered locus">BSU32680</name>
</gene>
<name>SUFU_BACSU</name>
<accession>O32163</accession>
<keyword id="KW-0002">3D-structure</keyword>
<keyword id="KW-0479">Metal-binding</keyword>
<keyword id="KW-1185">Reference proteome</keyword>
<keyword id="KW-0808">Transferase</keyword>
<keyword id="KW-0862">Zinc</keyword>
<sequence length="147" mass="16166">MSFNANLDTLYRQVIMDHYKNPRNKGVLNDSIVVDMNNPTCGDRIRLTMKLDGDIVEDAKFEGEGCSISMASASMMTQAIKGKDIETALSMSKIFSDMMQGKEYDDSIDLGDIEALQGVSKFPARIKCATLSWKALEKGVAKEEGGN</sequence>
<evidence type="ECO:0000269" key="1">
    <source>
    </source>
</evidence>
<evidence type="ECO:0000269" key="2">
    <source>
    </source>
</evidence>
<evidence type="ECO:0000269" key="3">
    <source>
    </source>
</evidence>
<evidence type="ECO:0000269" key="4">
    <source>
    </source>
</evidence>
<evidence type="ECO:0000269" key="5">
    <source>
    </source>
</evidence>
<evidence type="ECO:0000269" key="6">
    <source>
    </source>
</evidence>
<evidence type="ECO:0000269" key="7">
    <source>
    </source>
</evidence>
<evidence type="ECO:0000269" key="8">
    <source>
    </source>
</evidence>
<evidence type="ECO:0000269" key="9">
    <source ref="10"/>
</evidence>
<evidence type="ECO:0000269" key="10">
    <source ref="9"/>
</evidence>
<evidence type="ECO:0000305" key="11"/>
<evidence type="ECO:0000305" key="12">
    <source>
    </source>
</evidence>
<evidence type="ECO:0000305" key="13">
    <source>
    </source>
</evidence>
<evidence type="ECO:0000305" key="14">
    <source>
    </source>
</evidence>
<evidence type="ECO:0007744" key="15">
    <source>
        <dbReference type="PDB" id="5XT5"/>
    </source>
</evidence>
<evidence type="ECO:0007744" key="16">
    <source>
        <dbReference type="PDB" id="5XT6"/>
    </source>
</evidence>
<evidence type="ECO:0007829" key="17">
    <source>
        <dbReference type="PDB" id="2AZH"/>
    </source>
</evidence>
<evidence type="ECO:0007829" key="18">
    <source>
        <dbReference type="PDB" id="6JZV"/>
    </source>
</evidence>